<keyword id="KW-0342">GTP-binding</keyword>
<keyword id="KW-0547">Nucleotide-binding</keyword>
<keyword id="KW-0677">Repeat</keyword>
<keyword id="KW-0690">Ribosome biogenesis</keyword>
<name>DER_NEIMF</name>
<protein>
    <recommendedName>
        <fullName evidence="1">GTPase Der</fullName>
    </recommendedName>
    <alternativeName>
        <fullName evidence="1">GTP-binding protein EngA</fullName>
    </alternativeName>
</protein>
<gene>
    <name evidence="1" type="primary">der</name>
    <name type="synonym">engA</name>
    <name type="ordered locus">NMC0792</name>
</gene>
<reference key="1">
    <citation type="journal article" date="2007" name="PLoS Genet.">
        <title>Meningococcal genetic variation mechanisms viewed through comparative analysis of serogroup C strain FAM18.</title>
        <authorList>
            <person name="Bentley S.D."/>
            <person name="Vernikos G.S."/>
            <person name="Snyder L.A.S."/>
            <person name="Churcher C."/>
            <person name="Arrowsmith C."/>
            <person name="Chillingworth T."/>
            <person name="Cronin A."/>
            <person name="Davis P.H."/>
            <person name="Holroyd N.E."/>
            <person name="Jagels K."/>
            <person name="Maddison M."/>
            <person name="Moule S."/>
            <person name="Rabbinowitsch E."/>
            <person name="Sharp S."/>
            <person name="Unwin L."/>
            <person name="Whitehead S."/>
            <person name="Quail M.A."/>
            <person name="Achtman M."/>
            <person name="Barrell B.G."/>
            <person name="Saunders N.J."/>
            <person name="Parkhill J."/>
        </authorList>
    </citation>
    <scope>NUCLEOTIDE SEQUENCE [LARGE SCALE GENOMIC DNA]</scope>
    <source>
        <strain>ATCC 700532 / DSM 15464 / FAM18</strain>
    </source>
</reference>
<dbReference type="EMBL" id="AM421808">
    <property type="protein sequence ID" value="CAM10076.1"/>
    <property type="molecule type" value="Genomic_DNA"/>
</dbReference>
<dbReference type="RefSeq" id="WP_002226462.1">
    <property type="nucleotide sequence ID" value="NC_008767.1"/>
</dbReference>
<dbReference type="SMR" id="A1KT93"/>
<dbReference type="KEGG" id="nmc:NMC0792"/>
<dbReference type="HOGENOM" id="CLU_016077_6_2_4"/>
<dbReference type="Proteomes" id="UP000002286">
    <property type="component" value="Chromosome"/>
</dbReference>
<dbReference type="GO" id="GO:0016887">
    <property type="term" value="F:ATP hydrolysis activity"/>
    <property type="evidence" value="ECO:0007669"/>
    <property type="project" value="InterPro"/>
</dbReference>
<dbReference type="GO" id="GO:0005525">
    <property type="term" value="F:GTP binding"/>
    <property type="evidence" value="ECO:0007669"/>
    <property type="project" value="UniProtKB-UniRule"/>
</dbReference>
<dbReference type="GO" id="GO:0043022">
    <property type="term" value="F:ribosome binding"/>
    <property type="evidence" value="ECO:0007669"/>
    <property type="project" value="TreeGrafter"/>
</dbReference>
<dbReference type="GO" id="GO:0042254">
    <property type="term" value="P:ribosome biogenesis"/>
    <property type="evidence" value="ECO:0007669"/>
    <property type="project" value="UniProtKB-KW"/>
</dbReference>
<dbReference type="CDD" id="cd01894">
    <property type="entry name" value="EngA1"/>
    <property type="match status" value="1"/>
</dbReference>
<dbReference type="CDD" id="cd01895">
    <property type="entry name" value="EngA2"/>
    <property type="match status" value="1"/>
</dbReference>
<dbReference type="FunFam" id="3.30.300.20:FF:000023">
    <property type="entry name" value="GTPase Der"/>
    <property type="match status" value="1"/>
</dbReference>
<dbReference type="FunFam" id="3.40.50.300:FF:000040">
    <property type="entry name" value="GTPase Der"/>
    <property type="match status" value="1"/>
</dbReference>
<dbReference type="FunFam" id="3.40.50.300:FF:000057">
    <property type="entry name" value="GTPase Der"/>
    <property type="match status" value="1"/>
</dbReference>
<dbReference type="Gene3D" id="3.30.300.20">
    <property type="match status" value="1"/>
</dbReference>
<dbReference type="Gene3D" id="3.40.50.300">
    <property type="entry name" value="P-loop containing nucleotide triphosphate hydrolases"/>
    <property type="match status" value="2"/>
</dbReference>
<dbReference type="HAMAP" id="MF_00195">
    <property type="entry name" value="GTPase_Der"/>
    <property type="match status" value="1"/>
</dbReference>
<dbReference type="InterPro" id="IPR003593">
    <property type="entry name" value="AAA+_ATPase"/>
</dbReference>
<dbReference type="InterPro" id="IPR031166">
    <property type="entry name" value="G_ENGA"/>
</dbReference>
<dbReference type="InterPro" id="IPR006073">
    <property type="entry name" value="GTP-bd"/>
</dbReference>
<dbReference type="InterPro" id="IPR016484">
    <property type="entry name" value="GTPase_Der"/>
</dbReference>
<dbReference type="InterPro" id="IPR032859">
    <property type="entry name" value="KH_dom-like"/>
</dbReference>
<dbReference type="InterPro" id="IPR015946">
    <property type="entry name" value="KH_dom-like_a/b"/>
</dbReference>
<dbReference type="InterPro" id="IPR027417">
    <property type="entry name" value="P-loop_NTPase"/>
</dbReference>
<dbReference type="InterPro" id="IPR005225">
    <property type="entry name" value="Small_GTP-bd"/>
</dbReference>
<dbReference type="NCBIfam" id="TIGR03594">
    <property type="entry name" value="GTPase_EngA"/>
    <property type="match status" value="1"/>
</dbReference>
<dbReference type="NCBIfam" id="TIGR00231">
    <property type="entry name" value="small_GTP"/>
    <property type="match status" value="2"/>
</dbReference>
<dbReference type="PANTHER" id="PTHR43834">
    <property type="entry name" value="GTPASE DER"/>
    <property type="match status" value="1"/>
</dbReference>
<dbReference type="PANTHER" id="PTHR43834:SF6">
    <property type="entry name" value="GTPASE DER"/>
    <property type="match status" value="1"/>
</dbReference>
<dbReference type="Pfam" id="PF14714">
    <property type="entry name" value="KH_dom-like"/>
    <property type="match status" value="1"/>
</dbReference>
<dbReference type="Pfam" id="PF01926">
    <property type="entry name" value="MMR_HSR1"/>
    <property type="match status" value="2"/>
</dbReference>
<dbReference type="PIRSF" id="PIRSF006485">
    <property type="entry name" value="GTP-binding_EngA"/>
    <property type="match status" value="1"/>
</dbReference>
<dbReference type="PRINTS" id="PR00326">
    <property type="entry name" value="GTP1OBG"/>
</dbReference>
<dbReference type="SMART" id="SM00382">
    <property type="entry name" value="AAA"/>
    <property type="match status" value="2"/>
</dbReference>
<dbReference type="SUPFAM" id="SSF52540">
    <property type="entry name" value="P-loop containing nucleoside triphosphate hydrolases"/>
    <property type="match status" value="2"/>
</dbReference>
<dbReference type="PROSITE" id="PS51712">
    <property type="entry name" value="G_ENGA"/>
    <property type="match status" value="2"/>
</dbReference>
<comment type="function">
    <text evidence="1">GTPase that plays an essential role in the late steps of ribosome biogenesis.</text>
</comment>
<comment type="subunit">
    <text evidence="1">Associates with the 50S ribosomal subunit.</text>
</comment>
<comment type="similarity">
    <text evidence="1">Belongs to the TRAFAC class TrmE-Era-EngA-EngB-Septin-like GTPase superfamily. EngA (Der) GTPase family.</text>
</comment>
<organism>
    <name type="scientific">Neisseria meningitidis serogroup C / serotype 2a (strain ATCC 700532 / DSM 15464 / FAM18)</name>
    <dbReference type="NCBI Taxonomy" id="272831"/>
    <lineage>
        <taxon>Bacteria</taxon>
        <taxon>Pseudomonadati</taxon>
        <taxon>Pseudomonadota</taxon>
        <taxon>Betaproteobacteria</taxon>
        <taxon>Neisseriales</taxon>
        <taxon>Neisseriaceae</taxon>
        <taxon>Neisseria</taxon>
    </lineage>
</organism>
<sequence length="485" mass="53978">MKPTIALVGRPNVGKSTLFNRLTRTKDALVHDLPGLTRDRHYGHGKVGSKPYLVIDTGGFEPVVDSGILHEMAKQTLQAVDEADAVVFLVDGRTGLTPQDKIIADRLRQSPRPVYLAVNKGEGGNRAVLAAEFYELALGDPYVISGAHGDGVYYLIEDILETFPEPEAEEADAKHPVFAVIGRPNVGKSTLVNAILGEERVIAFDMAGTTRDSIHIDFEREGKPFTIIDTAGVRRRGKVDEAVEKFSVIKAMQAVEAANVAVLVLDAQQDIADQDATIAGFALEAGRALVVAVNKWDGISEERREQVKRDINRKLYFLDFAKFHFISALKERGIDGLFDSIQAAYNAAMIKMPTPKITRVLQSAIERQQPPRAGLVRPKMRYAHQGGMNPPVIVVHGNSLHAISDSYTRYLTQTFRKAFNLQGTPLRIQYNVSENPYENAEDKPKKKPLRRVSLSNRIEKREGRKEEKNRFKKKTKVSVKKQFSK</sequence>
<accession>A1KT93</accession>
<proteinExistence type="inferred from homology"/>
<feature type="chain" id="PRO_1000011675" description="GTPase Der">
    <location>
        <begin position="1"/>
        <end position="485"/>
    </location>
</feature>
<feature type="domain" description="EngA-type G 1">
    <location>
        <begin position="3"/>
        <end position="167"/>
    </location>
</feature>
<feature type="domain" description="EngA-type G 2">
    <location>
        <begin position="176"/>
        <end position="349"/>
    </location>
</feature>
<feature type="domain" description="KH-like" evidence="1">
    <location>
        <begin position="350"/>
        <end position="434"/>
    </location>
</feature>
<feature type="region of interest" description="Disordered" evidence="2">
    <location>
        <begin position="435"/>
        <end position="485"/>
    </location>
</feature>
<feature type="compositionally biased region" description="Basic and acidic residues" evidence="2">
    <location>
        <begin position="457"/>
        <end position="469"/>
    </location>
</feature>
<feature type="compositionally biased region" description="Basic residues" evidence="2">
    <location>
        <begin position="470"/>
        <end position="485"/>
    </location>
</feature>
<feature type="binding site" evidence="1">
    <location>
        <begin position="9"/>
        <end position="16"/>
    </location>
    <ligand>
        <name>GTP</name>
        <dbReference type="ChEBI" id="CHEBI:37565"/>
        <label>1</label>
    </ligand>
</feature>
<feature type="binding site" evidence="1">
    <location>
        <begin position="56"/>
        <end position="60"/>
    </location>
    <ligand>
        <name>GTP</name>
        <dbReference type="ChEBI" id="CHEBI:37565"/>
        <label>1</label>
    </ligand>
</feature>
<feature type="binding site" evidence="1">
    <location>
        <begin position="119"/>
        <end position="122"/>
    </location>
    <ligand>
        <name>GTP</name>
        <dbReference type="ChEBI" id="CHEBI:37565"/>
        <label>1</label>
    </ligand>
</feature>
<feature type="binding site" evidence="1">
    <location>
        <begin position="182"/>
        <end position="189"/>
    </location>
    <ligand>
        <name>GTP</name>
        <dbReference type="ChEBI" id="CHEBI:37565"/>
        <label>2</label>
    </ligand>
</feature>
<feature type="binding site" evidence="1">
    <location>
        <begin position="229"/>
        <end position="233"/>
    </location>
    <ligand>
        <name>GTP</name>
        <dbReference type="ChEBI" id="CHEBI:37565"/>
        <label>2</label>
    </ligand>
</feature>
<feature type="binding site" evidence="1">
    <location>
        <begin position="294"/>
        <end position="297"/>
    </location>
    <ligand>
        <name>GTP</name>
        <dbReference type="ChEBI" id="CHEBI:37565"/>
        <label>2</label>
    </ligand>
</feature>
<evidence type="ECO:0000255" key="1">
    <source>
        <dbReference type="HAMAP-Rule" id="MF_00195"/>
    </source>
</evidence>
<evidence type="ECO:0000256" key="2">
    <source>
        <dbReference type="SAM" id="MobiDB-lite"/>
    </source>
</evidence>